<protein>
    <recommendedName>
        <fullName evidence="2">N(4)-acetylcytidine amidohydrolase</fullName>
        <shortName evidence="2">ac4C amidohydrolase</shortName>
        <ecNumber evidence="2">3.5.1.135</ecNumber>
    </recommendedName>
</protein>
<feature type="chain" id="PRO_1000212549" description="N(4)-acetylcytidine amidohydrolase">
    <location>
        <begin position="1"/>
        <end position="107"/>
    </location>
</feature>
<feature type="domain" description="ASCH" evidence="1">
    <location>
        <begin position="6"/>
        <end position="102"/>
    </location>
</feature>
<feature type="active site" description="Proton acceptor" evidence="2">
    <location>
        <position position="20"/>
    </location>
</feature>
<feature type="active site" description="Nucleophile" evidence="2">
    <location>
        <position position="23"/>
    </location>
</feature>
<feature type="active site" description="Proton donor" evidence="2">
    <location>
        <position position="73"/>
    </location>
</feature>
<proteinExistence type="inferred from homology"/>
<comment type="function">
    <text evidence="2">Catalyzes the hydrolysis of N(4)-acetylcytidine (ac4C).</text>
</comment>
<comment type="catalytic activity">
    <reaction evidence="2">
        <text>N(4)-acetylcytidine + H2O = cytidine + acetate + H(+)</text>
        <dbReference type="Rhea" id="RHEA:62932"/>
        <dbReference type="ChEBI" id="CHEBI:15377"/>
        <dbReference type="ChEBI" id="CHEBI:15378"/>
        <dbReference type="ChEBI" id="CHEBI:17562"/>
        <dbReference type="ChEBI" id="CHEBI:30089"/>
        <dbReference type="ChEBI" id="CHEBI:70989"/>
        <dbReference type="EC" id="3.5.1.135"/>
    </reaction>
</comment>
<comment type="catalytic activity">
    <reaction evidence="2">
        <text>N(4)-acetyl-2'-deoxycytidine + H2O = 2'-deoxycytidine + acetate + H(+)</text>
        <dbReference type="Rhea" id="RHEA:62936"/>
        <dbReference type="ChEBI" id="CHEBI:15377"/>
        <dbReference type="ChEBI" id="CHEBI:15378"/>
        <dbReference type="ChEBI" id="CHEBI:15698"/>
        <dbReference type="ChEBI" id="CHEBI:30089"/>
        <dbReference type="ChEBI" id="CHEBI:146133"/>
        <dbReference type="EC" id="3.5.1.135"/>
    </reaction>
</comment>
<comment type="catalytic activity">
    <reaction evidence="2">
        <text>N(4)-acetylcytosine + H2O = cytosine + acetate + H(+)</text>
        <dbReference type="Rhea" id="RHEA:62940"/>
        <dbReference type="ChEBI" id="CHEBI:15377"/>
        <dbReference type="ChEBI" id="CHEBI:15378"/>
        <dbReference type="ChEBI" id="CHEBI:16040"/>
        <dbReference type="ChEBI" id="CHEBI:30089"/>
        <dbReference type="ChEBI" id="CHEBI:146134"/>
        <dbReference type="EC" id="3.5.1.135"/>
    </reaction>
</comment>
<comment type="similarity">
    <text evidence="2">Belongs to the N(4)-acetylcytidine amidohydrolase family.</text>
</comment>
<name>AC4CH_EDWI9</name>
<keyword id="KW-0378">Hydrolase</keyword>
<dbReference type="EC" id="3.5.1.135" evidence="2"/>
<dbReference type="EMBL" id="CP001600">
    <property type="protein sequence ID" value="ACR69043.1"/>
    <property type="molecule type" value="Genomic_DNA"/>
</dbReference>
<dbReference type="SMR" id="C5BGW5"/>
<dbReference type="STRING" id="67780.B6E78_02380"/>
<dbReference type="KEGG" id="eic:NT01EI_1867"/>
<dbReference type="PATRIC" id="fig|634503.3.peg.1675"/>
<dbReference type="HOGENOM" id="CLU_152586_0_0_6"/>
<dbReference type="OrthoDB" id="8590202at2"/>
<dbReference type="Proteomes" id="UP000001485">
    <property type="component" value="Chromosome"/>
</dbReference>
<dbReference type="GO" id="GO:0005829">
    <property type="term" value="C:cytosol"/>
    <property type="evidence" value="ECO:0007669"/>
    <property type="project" value="TreeGrafter"/>
</dbReference>
<dbReference type="GO" id="GO:0016813">
    <property type="term" value="F:hydrolase activity, acting on carbon-nitrogen (but not peptide) bonds, in linear amidines"/>
    <property type="evidence" value="ECO:0007669"/>
    <property type="project" value="UniProtKB-UniRule"/>
</dbReference>
<dbReference type="GO" id="GO:0106251">
    <property type="term" value="F:N4-acetylcytidine amidohydrolase activity"/>
    <property type="evidence" value="ECO:0007669"/>
    <property type="project" value="RHEA"/>
</dbReference>
<dbReference type="CDD" id="cd06552">
    <property type="entry name" value="ASCH_yqfb_like"/>
    <property type="match status" value="1"/>
</dbReference>
<dbReference type="Gene3D" id="2.30.130.30">
    <property type="entry name" value="Hypothetical protein"/>
    <property type="match status" value="1"/>
</dbReference>
<dbReference type="HAMAP" id="MF_00684">
    <property type="entry name" value="ac4C_amidohydr"/>
    <property type="match status" value="1"/>
</dbReference>
<dbReference type="InterPro" id="IPR008314">
    <property type="entry name" value="AC4CH"/>
</dbReference>
<dbReference type="InterPro" id="IPR007374">
    <property type="entry name" value="ASCH_domain"/>
</dbReference>
<dbReference type="InterPro" id="IPR015947">
    <property type="entry name" value="PUA-like_sf"/>
</dbReference>
<dbReference type="NCBIfam" id="NF003443">
    <property type="entry name" value="PRK04980.1"/>
    <property type="match status" value="1"/>
</dbReference>
<dbReference type="PANTHER" id="PTHR38088">
    <property type="entry name" value="UCP029143 FAMILY PROTEIN"/>
    <property type="match status" value="1"/>
</dbReference>
<dbReference type="PANTHER" id="PTHR38088:SF2">
    <property type="entry name" value="UCP029143 FAMILY PROTEIN"/>
    <property type="match status" value="1"/>
</dbReference>
<dbReference type="Pfam" id="PF04266">
    <property type="entry name" value="ASCH"/>
    <property type="match status" value="1"/>
</dbReference>
<dbReference type="PIRSF" id="PIRSF029143">
    <property type="entry name" value="UCP029143"/>
    <property type="match status" value="1"/>
</dbReference>
<dbReference type="SMART" id="SM01022">
    <property type="entry name" value="ASCH"/>
    <property type="match status" value="1"/>
</dbReference>
<dbReference type="SUPFAM" id="SSF88697">
    <property type="entry name" value="PUA domain-like"/>
    <property type="match status" value="1"/>
</dbReference>
<reference key="1">
    <citation type="submission" date="2009-03" db="EMBL/GenBank/DDBJ databases">
        <title>Complete genome sequence of Edwardsiella ictaluri 93-146.</title>
        <authorList>
            <person name="Williams M.L."/>
            <person name="Gillaspy A.F."/>
            <person name="Dyer D.W."/>
            <person name="Thune R.L."/>
            <person name="Waldbieser G.C."/>
            <person name="Schuster S.C."/>
            <person name="Gipson J."/>
            <person name="Zaitshik J."/>
            <person name="Landry C."/>
            <person name="Lawrence M.L."/>
        </authorList>
    </citation>
    <scope>NUCLEOTIDE SEQUENCE [LARGE SCALE GENOMIC DNA]</scope>
    <source>
        <strain>93-146</strain>
    </source>
</reference>
<sequence>MKPDITFYRRFQADILAGRKTITIRDDSESHFQPGQRLMVGQYEDGRPFCEIEVIGVTPVMLAQLNAQHAAQENMTLDALRSVIGEIYPQIERLYVISFSLVRALAG</sequence>
<accession>C5BGW5</accession>
<organism>
    <name type="scientific">Edwardsiella ictaluri (strain 93-146)</name>
    <dbReference type="NCBI Taxonomy" id="634503"/>
    <lineage>
        <taxon>Bacteria</taxon>
        <taxon>Pseudomonadati</taxon>
        <taxon>Pseudomonadota</taxon>
        <taxon>Gammaproteobacteria</taxon>
        <taxon>Enterobacterales</taxon>
        <taxon>Hafniaceae</taxon>
        <taxon>Edwardsiella</taxon>
    </lineage>
</organism>
<gene>
    <name type="ordered locus">NT01EI_1867</name>
</gene>
<evidence type="ECO:0000255" key="1"/>
<evidence type="ECO:0000255" key="2">
    <source>
        <dbReference type="HAMAP-Rule" id="MF_00684"/>
    </source>
</evidence>